<sequence>MTDVTIKTLAAERQTSVERLVQQFADAGIRKSADDSVSAQEKQTLIDHLNQKNSGPDKLTLQRKTRSTLNIPGTGGKSKSVQIEVRKKRTFVKRDPQEAERLAAEEQARREAEESAKREAQQKAEREAAEQAKREAAEQAKREAAEKDKVSNQQDDMTKNAQAEKARREQEAAELKRKAEEEARRKLEEEARRVAEEARRMAEENKWTDNAEPTEDSSDYHVTTSQHARQAEDESDREVEGGRGRGRNAKAARPKKGNKHAESKADREEARAAVRGGKGGKRKGSSLQQGFQKPAQAVNRDVVIGETITVGELANKMAVKGSQVIKAMMKLGAMATINQVIDQETAQLVAEEMGHKVILRRENELEEAVMSDRDTGAAAEPRAPVVTIMGHVDHGKTSLLDYIRSTKVASGEAGGITQHIGAYHVETENGMITFLDTPGHAAFTSMRARGAQATDIVVLVVAADDGVMPQTIEAIQHAKAAQVPVVVAVNKIDKPEADPDRVKNELSQYGILPEEWGGESQFVHVSAKAGTGIDELLDAILLQAEVLELKAVRKGMASGAVIESFLDKGRGPVATVLVREGTLHKGDIVLCGFEYGRVRAMRNELGQEVLEAGPSIPVEILGLSGVPAAGDEVTVVRDEKKAREVALYRQGKFREVKLARQQKSKLENMFANMTEGEVHEVNIVLKADVQGSVEAISDSLLKLSTDEVKVKIIGSGVGGITETDATLAAASNAILVGFNVRADASARKVIEAESLDLRYYSVIYNLIDEVKAAMSGMLSPELKQQIIGLAEVRDVFKSPKFGAIAGCMVTEGVVKRHNPIRVLRDNVVIYEGELESLRRFKDDVNEVRNGMECGIGVKNYNDVRTGDVIEVFEIIEIQRTIA</sequence>
<protein>
    <recommendedName>
        <fullName evidence="2">Translation initiation factor IF-2</fullName>
    </recommendedName>
</protein>
<feature type="chain" id="PRO_0000228241" description="Translation initiation factor IF-2">
    <location>
        <begin position="1"/>
        <end position="882"/>
    </location>
</feature>
<feature type="domain" description="tr-type G">
    <location>
        <begin position="381"/>
        <end position="550"/>
    </location>
</feature>
<feature type="region of interest" description="Disordered" evidence="3">
    <location>
        <begin position="28"/>
        <end position="296"/>
    </location>
</feature>
<feature type="region of interest" description="G1" evidence="1">
    <location>
        <begin position="390"/>
        <end position="397"/>
    </location>
</feature>
<feature type="region of interest" description="G2" evidence="1">
    <location>
        <begin position="415"/>
        <end position="419"/>
    </location>
</feature>
<feature type="region of interest" description="G3" evidence="1">
    <location>
        <begin position="436"/>
        <end position="439"/>
    </location>
</feature>
<feature type="region of interest" description="G4" evidence="1">
    <location>
        <begin position="490"/>
        <end position="493"/>
    </location>
</feature>
<feature type="region of interest" description="G5" evidence="1">
    <location>
        <begin position="526"/>
        <end position="528"/>
    </location>
</feature>
<feature type="compositionally biased region" description="Polar residues" evidence="3">
    <location>
        <begin position="67"/>
        <end position="81"/>
    </location>
</feature>
<feature type="compositionally biased region" description="Basic and acidic residues" evidence="3">
    <location>
        <begin position="92"/>
        <end position="209"/>
    </location>
</feature>
<feature type="compositionally biased region" description="Basic residues" evidence="3">
    <location>
        <begin position="244"/>
        <end position="258"/>
    </location>
</feature>
<feature type="compositionally biased region" description="Basic and acidic residues" evidence="3">
    <location>
        <begin position="259"/>
        <end position="272"/>
    </location>
</feature>
<feature type="binding site" evidence="2">
    <location>
        <begin position="390"/>
        <end position="397"/>
    </location>
    <ligand>
        <name>GTP</name>
        <dbReference type="ChEBI" id="CHEBI:37565"/>
    </ligand>
</feature>
<feature type="binding site" evidence="2">
    <location>
        <begin position="436"/>
        <end position="440"/>
    </location>
    <ligand>
        <name>GTP</name>
        <dbReference type="ChEBI" id="CHEBI:37565"/>
    </ligand>
</feature>
<feature type="binding site" evidence="2">
    <location>
        <begin position="490"/>
        <end position="493"/>
    </location>
    <ligand>
        <name>GTP</name>
        <dbReference type="ChEBI" id="CHEBI:37565"/>
    </ligand>
</feature>
<feature type="modified residue" description="N6-acetyllysine" evidence="1">
    <location>
        <position position="800"/>
    </location>
</feature>
<comment type="function">
    <text evidence="2">One of the essential components for the initiation of protein synthesis. Protects formylmethionyl-tRNA from spontaneous hydrolysis and promotes its binding to the 30S ribosomal subunits. Also involved in the hydrolysis of GTP during the formation of the 70S ribosomal complex.</text>
</comment>
<comment type="subcellular location">
    <subcellularLocation>
        <location evidence="2">Cytoplasm</location>
    </subcellularLocation>
</comment>
<comment type="similarity">
    <text evidence="2">Belongs to the TRAFAC class translation factor GTPase superfamily. Classic translation factor GTPase family. IF-2 subfamily.</text>
</comment>
<name>IF2_SHIBS</name>
<dbReference type="EMBL" id="CP000036">
    <property type="protein sequence ID" value="ABB67711.1"/>
    <property type="molecule type" value="Genomic_DNA"/>
</dbReference>
<dbReference type="RefSeq" id="WP_000133055.1">
    <property type="nucleotide sequence ID" value="NC_007613.1"/>
</dbReference>
<dbReference type="SMR" id="Q31W47"/>
<dbReference type="KEGG" id="sbo:SBO_3214"/>
<dbReference type="HOGENOM" id="CLU_006301_6_3_6"/>
<dbReference type="Proteomes" id="UP000007067">
    <property type="component" value="Chromosome"/>
</dbReference>
<dbReference type="GO" id="GO:0005829">
    <property type="term" value="C:cytosol"/>
    <property type="evidence" value="ECO:0007669"/>
    <property type="project" value="TreeGrafter"/>
</dbReference>
<dbReference type="GO" id="GO:0005525">
    <property type="term" value="F:GTP binding"/>
    <property type="evidence" value="ECO:0007669"/>
    <property type="project" value="UniProtKB-KW"/>
</dbReference>
<dbReference type="GO" id="GO:0003924">
    <property type="term" value="F:GTPase activity"/>
    <property type="evidence" value="ECO:0007669"/>
    <property type="project" value="UniProtKB-UniRule"/>
</dbReference>
<dbReference type="GO" id="GO:0097216">
    <property type="term" value="F:guanosine tetraphosphate binding"/>
    <property type="evidence" value="ECO:0007669"/>
    <property type="project" value="UniProtKB-ARBA"/>
</dbReference>
<dbReference type="GO" id="GO:0003743">
    <property type="term" value="F:translation initiation factor activity"/>
    <property type="evidence" value="ECO:0007669"/>
    <property type="project" value="UniProtKB-UniRule"/>
</dbReference>
<dbReference type="CDD" id="cd01887">
    <property type="entry name" value="IF2_eIF5B"/>
    <property type="match status" value="1"/>
</dbReference>
<dbReference type="CDD" id="cd03702">
    <property type="entry name" value="IF2_mtIF2_II"/>
    <property type="match status" value="1"/>
</dbReference>
<dbReference type="CDD" id="cd03692">
    <property type="entry name" value="mtIF2_IVc"/>
    <property type="match status" value="1"/>
</dbReference>
<dbReference type="FunFam" id="2.40.30.10:FF:000007">
    <property type="entry name" value="Translation initiation factor IF-2"/>
    <property type="match status" value="1"/>
</dbReference>
<dbReference type="FunFam" id="2.40.30.10:FF:000008">
    <property type="entry name" value="Translation initiation factor IF-2"/>
    <property type="match status" value="1"/>
</dbReference>
<dbReference type="FunFam" id="3.30.56.50:FF:000001">
    <property type="entry name" value="Translation initiation factor IF-2"/>
    <property type="match status" value="1"/>
</dbReference>
<dbReference type="FunFam" id="3.40.50.10050:FF:000001">
    <property type="entry name" value="Translation initiation factor IF-2"/>
    <property type="match status" value="1"/>
</dbReference>
<dbReference type="FunFam" id="3.40.50.300:FF:000019">
    <property type="entry name" value="Translation initiation factor IF-2"/>
    <property type="match status" value="1"/>
</dbReference>
<dbReference type="Gene3D" id="3.40.50.300">
    <property type="entry name" value="P-loop containing nucleotide triphosphate hydrolases"/>
    <property type="match status" value="1"/>
</dbReference>
<dbReference type="Gene3D" id="3.30.56.50">
    <property type="entry name" value="Putative DNA-binding domain, N-terminal subdomain of bacterial translation initiation factor IF2"/>
    <property type="match status" value="1"/>
</dbReference>
<dbReference type="Gene3D" id="2.40.30.10">
    <property type="entry name" value="Translation factors"/>
    <property type="match status" value="2"/>
</dbReference>
<dbReference type="Gene3D" id="3.40.50.10050">
    <property type="entry name" value="Translation initiation factor IF- 2, domain 3"/>
    <property type="match status" value="1"/>
</dbReference>
<dbReference type="HAMAP" id="MF_00100_B">
    <property type="entry name" value="IF_2_B"/>
    <property type="match status" value="1"/>
</dbReference>
<dbReference type="InterPro" id="IPR009061">
    <property type="entry name" value="DNA-bd_dom_put_sf"/>
</dbReference>
<dbReference type="InterPro" id="IPR053905">
    <property type="entry name" value="EF-G-like_DII"/>
</dbReference>
<dbReference type="InterPro" id="IPR004161">
    <property type="entry name" value="EFTu-like_2"/>
</dbReference>
<dbReference type="InterPro" id="IPR013575">
    <property type="entry name" value="IF2_assoc_dom_bac"/>
</dbReference>
<dbReference type="InterPro" id="IPR044145">
    <property type="entry name" value="IF2_II"/>
</dbReference>
<dbReference type="InterPro" id="IPR006847">
    <property type="entry name" value="IF2_N"/>
</dbReference>
<dbReference type="InterPro" id="IPR027417">
    <property type="entry name" value="P-loop_NTPase"/>
</dbReference>
<dbReference type="InterPro" id="IPR005225">
    <property type="entry name" value="Small_GTP-bd"/>
</dbReference>
<dbReference type="InterPro" id="IPR000795">
    <property type="entry name" value="T_Tr_GTP-bd_dom"/>
</dbReference>
<dbReference type="InterPro" id="IPR000178">
    <property type="entry name" value="TF_IF2_bacterial-like"/>
</dbReference>
<dbReference type="InterPro" id="IPR015760">
    <property type="entry name" value="TIF_IF2"/>
</dbReference>
<dbReference type="InterPro" id="IPR023115">
    <property type="entry name" value="TIF_IF2_dom3"/>
</dbReference>
<dbReference type="InterPro" id="IPR036925">
    <property type="entry name" value="TIF_IF2_dom3_sf"/>
</dbReference>
<dbReference type="InterPro" id="IPR009000">
    <property type="entry name" value="Transl_B-barrel_sf"/>
</dbReference>
<dbReference type="NCBIfam" id="TIGR00487">
    <property type="entry name" value="IF-2"/>
    <property type="match status" value="1"/>
</dbReference>
<dbReference type="NCBIfam" id="TIGR00231">
    <property type="entry name" value="small_GTP"/>
    <property type="match status" value="1"/>
</dbReference>
<dbReference type="PANTHER" id="PTHR43381:SF5">
    <property type="entry name" value="TR-TYPE G DOMAIN-CONTAINING PROTEIN"/>
    <property type="match status" value="1"/>
</dbReference>
<dbReference type="PANTHER" id="PTHR43381">
    <property type="entry name" value="TRANSLATION INITIATION FACTOR IF-2-RELATED"/>
    <property type="match status" value="1"/>
</dbReference>
<dbReference type="Pfam" id="PF22042">
    <property type="entry name" value="EF-G_D2"/>
    <property type="match status" value="1"/>
</dbReference>
<dbReference type="Pfam" id="PF00009">
    <property type="entry name" value="GTP_EFTU"/>
    <property type="match status" value="1"/>
</dbReference>
<dbReference type="Pfam" id="PF03144">
    <property type="entry name" value="GTP_EFTU_D2"/>
    <property type="match status" value="1"/>
</dbReference>
<dbReference type="Pfam" id="PF11987">
    <property type="entry name" value="IF-2"/>
    <property type="match status" value="1"/>
</dbReference>
<dbReference type="Pfam" id="PF08364">
    <property type="entry name" value="IF2_assoc"/>
    <property type="match status" value="1"/>
</dbReference>
<dbReference type="Pfam" id="PF04760">
    <property type="entry name" value="IF2_N"/>
    <property type="match status" value="2"/>
</dbReference>
<dbReference type="SUPFAM" id="SSF52156">
    <property type="entry name" value="Initiation factor IF2/eIF5b, domain 3"/>
    <property type="match status" value="1"/>
</dbReference>
<dbReference type="SUPFAM" id="SSF52540">
    <property type="entry name" value="P-loop containing nucleoside triphosphate hydrolases"/>
    <property type="match status" value="1"/>
</dbReference>
<dbReference type="SUPFAM" id="SSF46955">
    <property type="entry name" value="Putative DNA-binding domain"/>
    <property type="match status" value="1"/>
</dbReference>
<dbReference type="SUPFAM" id="SSF50447">
    <property type="entry name" value="Translation proteins"/>
    <property type="match status" value="2"/>
</dbReference>
<dbReference type="PROSITE" id="PS51722">
    <property type="entry name" value="G_TR_2"/>
    <property type="match status" value="1"/>
</dbReference>
<dbReference type="PROSITE" id="PS01176">
    <property type="entry name" value="IF2"/>
    <property type="match status" value="1"/>
</dbReference>
<reference key="1">
    <citation type="journal article" date="2005" name="Nucleic Acids Res.">
        <title>Genome dynamics and diversity of Shigella species, the etiologic agents of bacillary dysentery.</title>
        <authorList>
            <person name="Yang F."/>
            <person name="Yang J."/>
            <person name="Zhang X."/>
            <person name="Chen L."/>
            <person name="Jiang Y."/>
            <person name="Yan Y."/>
            <person name="Tang X."/>
            <person name="Wang J."/>
            <person name="Xiong Z."/>
            <person name="Dong J."/>
            <person name="Xue Y."/>
            <person name="Zhu Y."/>
            <person name="Xu X."/>
            <person name="Sun L."/>
            <person name="Chen S."/>
            <person name="Nie H."/>
            <person name="Peng J."/>
            <person name="Xu J."/>
            <person name="Wang Y."/>
            <person name="Yuan Z."/>
            <person name="Wen Y."/>
            <person name="Yao Z."/>
            <person name="Shen Y."/>
            <person name="Qiang B."/>
            <person name="Hou Y."/>
            <person name="Yu J."/>
            <person name="Jin Q."/>
        </authorList>
    </citation>
    <scope>NUCLEOTIDE SEQUENCE [LARGE SCALE GENOMIC DNA]</scope>
    <source>
        <strain>Sb227</strain>
    </source>
</reference>
<evidence type="ECO:0000250" key="1"/>
<evidence type="ECO:0000255" key="2">
    <source>
        <dbReference type="HAMAP-Rule" id="MF_00100"/>
    </source>
</evidence>
<evidence type="ECO:0000256" key="3">
    <source>
        <dbReference type="SAM" id="MobiDB-lite"/>
    </source>
</evidence>
<proteinExistence type="inferred from homology"/>
<organism>
    <name type="scientific">Shigella boydii serotype 4 (strain Sb227)</name>
    <dbReference type="NCBI Taxonomy" id="300268"/>
    <lineage>
        <taxon>Bacteria</taxon>
        <taxon>Pseudomonadati</taxon>
        <taxon>Pseudomonadota</taxon>
        <taxon>Gammaproteobacteria</taxon>
        <taxon>Enterobacterales</taxon>
        <taxon>Enterobacteriaceae</taxon>
        <taxon>Shigella</taxon>
    </lineage>
</organism>
<keyword id="KW-0007">Acetylation</keyword>
<keyword id="KW-0963">Cytoplasm</keyword>
<keyword id="KW-0342">GTP-binding</keyword>
<keyword id="KW-0396">Initiation factor</keyword>
<keyword id="KW-0547">Nucleotide-binding</keyword>
<keyword id="KW-0648">Protein biosynthesis</keyword>
<gene>
    <name evidence="2" type="primary">infB</name>
    <name type="ordered locus">SBO_3214</name>
</gene>
<accession>Q31W47</accession>